<name>YIDD_PARUW</name>
<comment type="function">
    <text evidence="1">Could be involved in insertion of integral membrane proteins into the membrane.</text>
</comment>
<comment type="subcellular location">
    <subcellularLocation>
        <location evidence="1">Cell inner membrane</location>
        <topology evidence="1">Peripheral membrane protein</topology>
        <orientation evidence="1">Cytoplasmic side</orientation>
    </subcellularLocation>
</comment>
<comment type="similarity">
    <text evidence="1">Belongs to the UPF0161 family.</text>
</comment>
<accession>Q6MBF7</accession>
<feature type="chain" id="PRO_0000253136" description="Putative membrane protein insertion efficiency factor">
    <location>
        <begin position="1"/>
        <end position="82"/>
    </location>
</feature>
<feature type="region of interest" description="Disordered" evidence="2">
    <location>
        <begin position="63"/>
        <end position="82"/>
    </location>
</feature>
<protein>
    <recommendedName>
        <fullName evidence="1">Putative membrane protein insertion efficiency factor</fullName>
    </recommendedName>
</protein>
<proteinExistence type="inferred from homology"/>
<evidence type="ECO:0000255" key="1">
    <source>
        <dbReference type="HAMAP-Rule" id="MF_00386"/>
    </source>
</evidence>
<evidence type="ECO:0000256" key="2">
    <source>
        <dbReference type="SAM" id="MobiDB-lite"/>
    </source>
</evidence>
<dbReference type="EMBL" id="BX908798">
    <property type="protein sequence ID" value="CAF24092.1"/>
    <property type="molecule type" value="Genomic_DNA"/>
</dbReference>
<dbReference type="RefSeq" id="WP_011175917.1">
    <property type="nucleotide sequence ID" value="NC_005861.2"/>
</dbReference>
<dbReference type="STRING" id="264201.pc1368"/>
<dbReference type="KEGG" id="pcu:PC_RS06565"/>
<dbReference type="eggNOG" id="COG0759">
    <property type="taxonomic scope" value="Bacteria"/>
</dbReference>
<dbReference type="HOGENOM" id="CLU_144811_5_2_0"/>
<dbReference type="OrthoDB" id="9801753at2"/>
<dbReference type="Proteomes" id="UP000000529">
    <property type="component" value="Chromosome"/>
</dbReference>
<dbReference type="GO" id="GO:0005886">
    <property type="term" value="C:plasma membrane"/>
    <property type="evidence" value="ECO:0007669"/>
    <property type="project" value="UniProtKB-SubCell"/>
</dbReference>
<dbReference type="HAMAP" id="MF_00386">
    <property type="entry name" value="UPF0161_YidD"/>
    <property type="match status" value="1"/>
</dbReference>
<dbReference type="InterPro" id="IPR002696">
    <property type="entry name" value="Membr_insert_effic_factor_YidD"/>
</dbReference>
<dbReference type="NCBIfam" id="TIGR00278">
    <property type="entry name" value="membrane protein insertion efficiency factor YidD"/>
    <property type="match status" value="1"/>
</dbReference>
<dbReference type="PANTHER" id="PTHR33383">
    <property type="entry name" value="MEMBRANE PROTEIN INSERTION EFFICIENCY FACTOR-RELATED"/>
    <property type="match status" value="1"/>
</dbReference>
<dbReference type="PANTHER" id="PTHR33383:SF1">
    <property type="entry name" value="MEMBRANE PROTEIN INSERTION EFFICIENCY FACTOR-RELATED"/>
    <property type="match status" value="1"/>
</dbReference>
<dbReference type="Pfam" id="PF01809">
    <property type="entry name" value="YidD"/>
    <property type="match status" value="1"/>
</dbReference>
<dbReference type="SMART" id="SM01234">
    <property type="entry name" value="Haemolytic"/>
    <property type="match status" value="1"/>
</dbReference>
<reference key="1">
    <citation type="journal article" date="2004" name="Science">
        <title>Illuminating the evolutionary history of chlamydiae.</title>
        <authorList>
            <person name="Horn M."/>
            <person name="Collingro A."/>
            <person name="Schmitz-Esser S."/>
            <person name="Beier C.L."/>
            <person name="Purkhold U."/>
            <person name="Fartmann B."/>
            <person name="Brandt P."/>
            <person name="Nyakatura G.J."/>
            <person name="Droege M."/>
            <person name="Frishman D."/>
            <person name="Rattei T."/>
            <person name="Mewes H.-W."/>
            <person name="Wagner M."/>
        </authorList>
    </citation>
    <scope>NUCLEOTIDE SEQUENCE [LARGE SCALE GENOMIC DNA]</scope>
    <source>
        <strain>UWE25</strain>
    </source>
</reference>
<organism>
    <name type="scientific">Protochlamydia amoebophila (strain UWE25)</name>
    <dbReference type="NCBI Taxonomy" id="264201"/>
    <lineage>
        <taxon>Bacteria</taxon>
        <taxon>Pseudomonadati</taxon>
        <taxon>Chlamydiota</taxon>
        <taxon>Chlamydiia</taxon>
        <taxon>Parachlamydiales</taxon>
        <taxon>Parachlamydiaceae</taxon>
        <taxon>Candidatus Protochlamydia</taxon>
    </lineage>
</organism>
<gene>
    <name type="ordered locus">pc1368</name>
</gene>
<keyword id="KW-0997">Cell inner membrane</keyword>
<keyword id="KW-1003">Cell membrane</keyword>
<keyword id="KW-0472">Membrane</keyword>
<keyword id="KW-1185">Reference proteome</keyword>
<sequence length="82" mass="9437">MIKKLLIYFVRFYQYTLSPLLGLTCRFYPTCSEYMILALQKHGAMKGAYLGVKRICRCHPWNPGGHDPVPESTILSKEKSVK</sequence>